<proteinExistence type="inferred from homology"/>
<evidence type="ECO:0000250" key="1">
    <source>
        <dbReference type="UniProtKB" id="P34253"/>
    </source>
</evidence>
<evidence type="ECO:0000250" key="2">
    <source>
        <dbReference type="UniProtKB" id="Q9LMH0"/>
    </source>
</evidence>
<evidence type="ECO:0000255" key="3"/>
<evidence type="ECO:0000255" key="4">
    <source>
        <dbReference type="PROSITE-ProRule" id="PRU00499"/>
    </source>
</evidence>
<evidence type="ECO:0000305" key="5"/>
<evidence type="ECO:0000312" key="6">
    <source>
        <dbReference type="EMBL" id="EEC68066.1"/>
    </source>
</evidence>
<evidence type="ECO:0000312" key="7">
    <source>
        <dbReference type="Proteomes" id="UP000007015"/>
    </source>
</evidence>
<gene>
    <name evidence="6" type="ORF">OsI_35919</name>
</gene>
<organism evidence="7">
    <name type="scientific">Oryza sativa subsp. indica</name>
    <name type="common">Rice</name>
    <dbReference type="NCBI Taxonomy" id="39946"/>
    <lineage>
        <taxon>Eukaryota</taxon>
        <taxon>Viridiplantae</taxon>
        <taxon>Streptophyta</taxon>
        <taxon>Embryophyta</taxon>
        <taxon>Tracheophyta</taxon>
        <taxon>Spermatophyta</taxon>
        <taxon>Magnoliopsida</taxon>
        <taxon>Liliopsida</taxon>
        <taxon>Poales</taxon>
        <taxon>Poaceae</taxon>
        <taxon>BOP clade</taxon>
        <taxon>Oryzoideae</taxon>
        <taxon>Oryzeae</taxon>
        <taxon>Oryzinae</taxon>
        <taxon>Oryza</taxon>
        <taxon>Oryza sativa</taxon>
    </lineage>
</organism>
<dbReference type="EMBL" id="CM000136">
    <property type="protein sequence ID" value="EEC68066.1"/>
    <property type="status" value="ALT_INIT"/>
    <property type="molecule type" value="Genomic_DNA"/>
</dbReference>
<dbReference type="SMR" id="B8BK80"/>
<dbReference type="STRING" id="39946.B8BK80"/>
<dbReference type="HOGENOM" id="CLU_027147_1_0_1"/>
<dbReference type="Proteomes" id="UP000007015">
    <property type="component" value="Chromosome 11"/>
</dbReference>
<dbReference type="GO" id="GO:0005737">
    <property type="term" value="C:cytoplasm"/>
    <property type="evidence" value="ECO:0007669"/>
    <property type="project" value="UniProtKB-SubCell"/>
</dbReference>
<dbReference type="GO" id="GO:0033588">
    <property type="term" value="C:elongator holoenzyme complex"/>
    <property type="evidence" value="ECO:0000250"/>
    <property type="project" value="UniProtKB"/>
</dbReference>
<dbReference type="GO" id="GO:0005634">
    <property type="term" value="C:nucleus"/>
    <property type="evidence" value="ECO:0007669"/>
    <property type="project" value="UniProtKB-SubCell"/>
</dbReference>
<dbReference type="GO" id="GO:0005524">
    <property type="term" value="F:ATP binding"/>
    <property type="evidence" value="ECO:0007669"/>
    <property type="project" value="UniProtKB-KW"/>
</dbReference>
<dbReference type="GO" id="GO:0005516">
    <property type="term" value="F:calmodulin binding"/>
    <property type="evidence" value="ECO:0000250"/>
    <property type="project" value="UniProtKB"/>
</dbReference>
<dbReference type="GO" id="GO:0080178">
    <property type="term" value="P:5-carbamoylmethyl uridine residue modification"/>
    <property type="evidence" value="ECO:0000250"/>
    <property type="project" value="UniProtKB"/>
</dbReference>
<dbReference type="GO" id="GO:0006357">
    <property type="term" value="P:regulation of transcription by RNA polymerase II"/>
    <property type="evidence" value="ECO:0000250"/>
    <property type="project" value="UniProtKB"/>
</dbReference>
<dbReference type="GO" id="GO:0006400">
    <property type="term" value="P:tRNA modification"/>
    <property type="evidence" value="ECO:0000250"/>
    <property type="project" value="UniProtKB"/>
</dbReference>
<dbReference type="FunFam" id="3.40.50.300:FF:000827">
    <property type="entry name" value="KTI12 chromatin-associated homolog"/>
    <property type="match status" value="1"/>
</dbReference>
<dbReference type="Gene3D" id="3.40.50.300">
    <property type="entry name" value="P-loop containing nucleotide triphosphate hydrolases"/>
    <property type="match status" value="1"/>
</dbReference>
<dbReference type="InterPro" id="IPR013641">
    <property type="entry name" value="KTI12/PSTK"/>
</dbReference>
<dbReference type="InterPro" id="IPR027417">
    <property type="entry name" value="P-loop_NTPase"/>
</dbReference>
<dbReference type="PANTHER" id="PTHR12435">
    <property type="match status" value="1"/>
</dbReference>
<dbReference type="Pfam" id="PF08433">
    <property type="entry name" value="KTI12"/>
    <property type="match status" value="1"/>
</dbReference>
<dbReference type="SUPFAM" id="SSF52540">
    <property type="entry name" value="P-loop containing nucleoside triphosphate hydrolases"/>
    <property type="match status" value="1"/>
</dbReference>
<sequence>MALVVICGQPCSGKSAAAACLAAALCSSTSDLTVRIIDESSLHLGRNDSYKDMVVEKNLRGVLRSEVDRSVSRDSIIVVDSLNNIKGYRYELWCLARASGIRYCVLFCDTEVDHCREWNTKRQEKGEPTYDNNIFDDLVSRFEKPDRRNRWDSPLFELFPSRDGVMESSPVIAEAVSYLTKKVDSKTRDVKVLQPTIATQTARTTEANSLYEMDKATQEVINAIVEAQSCGLGLPVNKISLGPDLPTICLQRSVGLPELRSLRRTFIKLAGQYSLSGPPPPADADSATRMFVDYLNREISS</sequence>
<name>KTI12_ORYSI</name>
<feature type="chain" id="PRO_0000432192" description="Protein KTI12 homolog">
    <location>
        <begin position="1"/>
        <end position="301"/>
    </location>
</feature>
<feature type="region of interest" description="Calmodulin-binding" evidence="3">
    <location>
        <begin position="262"/>
        <end position="275"/>
    </location>
</feature>
<feature type="binding site" evidence="4">
    <location>
        <begin position="8"/>
        <end position="15"/>
    </location>
    <ligand>
        <name>ATP</name>
        <dbReference type="ChEBI" id="CHEBI:30616"/>
    </ligand>
</feature>
<reference key="1">
    <citation type="journal article" date="2005" name="PLoS Biol.">
        <title>The genomes of Oryza sativa: a history of duplications.</title>
        <authorList>
            <person name="Yu J."/>
            <person name="Wang J."/>
            <person name="Lin W."/>
            <person name="Li S."/>
            <person name="Li H."/>
            <person name="Zhou J."/>
            <person name="Ni P."/>
            <person name="Dong W."/>
            <person name="Hu S."/>
            <person name="Zeng C."/>
            <person name="Zhang J."/>
            <person name="Zhang Y."/>
            <person name="Li R."/>
            <person name="Xu Z."/>
            <person name="Li S."/>
            <person name="Li X."/>
            <person name="Zheng H."/>
            <person name="Cong L."/>
            <person name="Lin L."/>
            <person name="Yin J."/>
            <person name="Geng J."/>
            <person name="Li G."/>
            <person name="Shi J."/>
            <person name="Liu J."/>
            <person name="Lv H."/>
            <person name="Li J."/>
            <person name="Wang J."/>
            <person name="Deng Y."/>
            <person name="Ran L."/>
            <person name="Shi X."/>
            <person name="Wang X."/>
            <person name="Wu Q."/>
            <person name="Li C."/>
            <person name="Ren X."/>
            <person name="Wang J."/>
            <person name="Wang X."/>
            <person name="Li D."/>
            <person name="Liu D."/>
            <person name="Zhang X."/>
            <person name="Ji Z."/>
            <person name="Zhao W."/>
            <person name="Sun Y."/>
            <person name="Zhang Z."/>
            <person name="Bao J."/>
            <person name="Han Y."/>
            <person name="Dong L."/>
            <person name="Ji J."/>
            <person name="Chen P."/>
            <person name="Wu S."/>
            <person name="Liu J."/>
            <person name="Xiao Y."/>
            <person name="Bu D."/>
            <person name="Tan J."/>
            <person name="Yang L."/>
            <person name="Ye C."/>
            <person name="Zhang J."/>
            <person name="Xu J."/>
            <person name="Zhou Y."/>
            <person name="Yu Y."/>
            <person name="Zhang B."/>
            <person name="Zhuang S."/>
            <person name="Wei H."/>
            <person name="Liu B."/>
            <person name="Lei M."/>
            <person name="Yu H."/>
            <person name="Li Y."/>
            <person name="Xu H."/>
            <person name="Wei S."/>
            <person name="He X."/>
            <person name="Fang L."/>
            <person name="Zhang Z."/>
            <person name="Zhang Y."/>
            <person name="Huang X."/>
            <person name="Su Z."/>
            <person name="Tong W."/>
            <person name="Li J."/>
            <person name="Tong Z."/>
            <person name="Li S."/>
            <person name="Ye J."/>
            <person name="Wang L."/>
            <person name="Fang L."/>
            <person name="Lei T."/>
            <person name="Chen C.-S."/>
            <person name="Chen H.-C."/>
            <person name="Xu Z."/>
            <person name="Li H."/>
            <person name="Huang H."/>
            <person name="Zhang F."/>
            <person name="Xu H."/>
            <person name="Li N."/>
            <person name="Zhao C."/>
            <person name="Li S."/>
            <person name="Dong L."/>
            <person name="Huang Y."/>
            <person name="Li L."/>
            <person name="Xi Y."/>
            <person name="Qi Q."/>
            <person name="Li W."/>
            <person name="Zhang B."/>
            <person name="Hu W."/>
            <person name="Zhang Y."/>
            <person name="Tian X."/>
            <person name="Jiao Y."/>
            <person name="Liang X."/>
            <person name="Jin J."/>
            <person name="Gao L."/>
            <person name="Zheng W."/>
            <person name="Hao B."/>
            <person name="Liu S.-M."/>
            <person name="Wang W."/>
            <person name="Yuan L."/>
            <person name="Cao M."/>
            <person name="McDermott J."/>
            <person name="Samudrala R."/>
            <person name="Wang J."/>
            <person name="Wong G.K.-S."/>
            <person name="Yang H."/>
        </authorList>
    </citation>
    <scope>NUCLEOTIDE SEQUENCE [LARGE SCALE GENOMIC DNA]</scope>
    <source>
        <strain>cv. 93-11</strain>
    </source>
</reference>
<accession>B8BK80</accession>
<keyword id="KW-0067">ATP-binding</keyword>
<keyword id="KW-0963">Cytoplasm</keyword>
<keyword id="KW-0547">Nucleotide-binding</keyword>
<keyword id="KW-0539">Nucleus</keyword>
<keyword id="KW-1185">Reference proteome</keyword>
<keyword id="KW-0804">Transcription</keyword>
<keyword id="KW-0805">Transcription regulation</keyword>
<keyword id="KW-0819">tRNA processing</keyword>
<comment type="function">
    <text evidence="1 2">Elongator complex-associated factor that is not a structural subunit but rather transiently contacts the complex (By similarity). Regulates both meristem activity and organ growth; acts as a positive regulator of adaxial leaf patterning. Required for an early step in synthesis of 5-carbamoylmethyl (ncm5) groups present on uridines (ncm5U) at the wobble position in tRNA (By similarity).</text>
</comment>
<comment type="subunit">
    <text evidence="1 2">Interacts with the elongator complex (By similarity). Binds to calmodulin in a calcium-dependent manner (By similarity).</text>
</comment>
<comment type="subcellular location">
    <subcellularLocation>
        <location evidence="1">Cytoplasm</location>
    </subcellularLocation>
    <subcellularLocation>
        <location evidence="1">Nucleus</location>
    </subcellularLocation>
</comment>
<comment type="similarity">
    <text evidence="5">Belongs to the KTI12 family.</text>
</comment>
<comment type="sequence caution" evidence="5">
    <conflict type="erroneous initiation">
        <sequence resource="EMBL-CDS" id="EEC68066"/>
    </conflict>
    <text>Extended N-terminus.</text>
</comment>
<protein>
    <recommendedName>
        <fullName evidence="5">Protein KTI12 homolog</fullName>
        <shortName evidence="5">OsKTI12</shortName>
    </recommendedName>
</protein>